<sequence>MKEGIHPNYREVLFHDVSNDFKFVTRSTIQTKDTIEHEGKTYPLAKIEVSSESHPFYTGTQKIMDTAGRVEKFRQKFGSKLGAAKK</sequence>
<accession>Q1LLG0</accession>
<name>RL31B_CUPMC</name>
<reference key="1">
    <citation type="journal article" date="2010" name="PLoS ONE">
        <title>The complete genome sequence of Cupriavidus metallidurans strain CH34, a master survivalist in harsh and anthropogenic environments.</title>
        <authorList>
            <person name="Janssen P.J."/>
            <person name="Van Houdt R."/>
            <person name="Moors H."/>
            <person name="Monsieurs P."/>
            <person name="Morin N."/>
            <person name="Michaux A."/>
            <person name="Benotmane M.A."/>
            <person name="Leys N."/>
            <person name="Vallaeys T."/>
            <person name="Lapidus A."/>
            <person name="Monchy S."/>
            <person name="Medigue C."/>
            <person name="Taghavi S."/>
            <person name="McCorkle S."/>
            <person name="Dunn J."/>
            <person name="van der Lelie D."/>
            <person name="Mergeay M."/>
        </authorList>
    </citation>
    <scope>NUCLEOTIDE SEQUENCE [LARGE SCALE GENOMIC DNA]</scope>
    <source>
        <strain>ATCC 43123 / DSM 2839 / NBRC 102507 / CH34</strain>
    </source>
</reference>
<protein>
    <recommendedName>
        <fullName evidence="1">Large ribosomal subunit protein bL31B</fullName>
    </recommendedName>
    <alternativeName>
        <fullName evidence="2">50S ribosomal protein L31 type B</fullName>
    </alternativeName>
</protein>
<dbReference type="EMBL" id="CP000352">
    <property type="protein sequence ID" value="ABF09016.1"/>
    <property type="molecule type" value="Genomic_DNA"/>
</dbReference>
<dbReference type="RefSeq" id="WP_008647952.1">
    <property type="nucleotide sequence ID" value="NC_007973.1"/>
</dbReference>
<dbReference type="SMR" id="Q1LLG0"/>
<dbReference type="STRING" id="266264.Rmet_2137"/>
<dbReference type="KEGG" id="rme:Rmet_2137"/>
<dbReference type="eggNOG" id="COG0254">
    <property type="taxonomic scope" value="Bacteria"/>
</dbReference>
<dbReference type="HOGENOM" id="CLU_114306_2_1_4"/>
<dbReference type="Proteomes" id="UP000002429">
    <property type="component" value="Chromosome"/>
</dbReference>
<dbReference type="GO" id="GO:1990904">
    <property type="term" value="C:ribonucleoprotein complex"/>
    <property type="evidence" value="ECO:0007669"/>
    <property type="project" value="UniProtKB-KW"/>
</dbReference>
<dbReference type="GO" id="GO:0005840">
    <property type="term" value="C:ribosome"/>
    <property type="evidence" value="ECO:0007669"/>
    <property type="project" value="UniProtKB-KW"/>
</dbReference>
<dbReference type="GO" id="GO:0003735">
    <property type="term" value="F:structural constituent of ribosome"/>
    <property type="evidence" value="ECO:0007669"/>
    <property type="project" value="InterPro"/>
</dbReference>
<dbReference type="GO" id="GO:0006412">
    <property type="term" value="P:translation"/>
    <property type="evidence" value="ECO:0007669"/>
    <property type="project" value="UniProtKB-UniRule"/>
</dbReference>
<dbReference type="Gene3D" id="4.10.830.30">
    <property type="entry name" value="Ribosomal protein L31"/>
    <property type="match status" value="1"/>
</dbReference>
<dbReference type="HAMAP" id="MF_00502">
    <property type="entry name" value="Ribosomal_bL31_2"/>
    <property type="match status" value="1"/>
</dbReference>
<dbReference type="InterPro" id="IPR034704">
    <property type="entry name" value="Ribosomal_bL28/bL31-like_sf"/>
</dbReference>
<dbReference type="InterPro" id="IPR002150">
    <property type="entry name" value="Ribosomal_bL31"/>
</dbReference>
<dbReference type="InterPro" id="IPR027493">
    <property type="entry name" value="Ribosomal_bL31_B"/>
</dbReference>
<dbReference type="InterPro" id="IPR042105">
    <property type="entry name" value="Ribosomal_bL31_sf"/>
</dbReference>
<dbReference type="NCBIfam" id="TIGR00105">
    <property type="entry name" value="L31"/>
    <property type="match status" value="1"/>
</dbReference>
<dbReference type="NCBIfam" id="NF002462">
    <property type="entry name" value="PRK01678.1"/>
    <property type="match status" value="1"/>
</dbReference>
<dbReference type="PANTHER" id="PTHR33280">
    <property type="entry name" value="50S RIBOSOMAL PROTEIN L31, CHLOROPLASTIC"/>
    <property type="match status" value="1"/>
</dbReference>
<dbReference type="PANTHER" id="PTHR33280:SF1">
    <property type="entry name" value="LARGE RIBOSOMAL SUBUNIT PROTEIN BL31C"/>
    <property type="match status" value="1"/>
</dbReference>
<dbReference type="Pfam" id="PF01197">
    <property type="entry name" value="Ribosomal_L31"/>
    <property type="match status" value="1"/>
</dbReference>
<dbReference type="PRINTS" id="PR01249">
    <property type="entry name" value="RIBOSOMALL31"/>
</dbReference>
<dbReference type="SUPFAM" id="SSF143800">
    <property type="entry name" value="L28p-like"/>
    <property type="match status" value="1"/>
</dbReference>
<dbReference type="PROSITE" id="PS01143">
    <property type="entry name" value="RIBOSOMAL_L31"/>
    <property type="match status" value="1"/>
</dbReference>
<feature type="chain" id="PRO_0000259117" description="Large ribosomal subunit protein bL31B">
    <location>
        <begin position="1"/>
        <end position="86"/>
    </location>
</feature>
<gene>
    <name evidence="1" type="primary">rpmE2</name>
    <name type="ordered locus">Rmet_2137</name>
</gene>
<keyword id="KW-1185">Reference proteome</keyword>
<keyword id="KW-0687">Ribonucleoprotein</keyword>
<keyword id="KW-0689">Ribosomal protein</keyword>
<organism>
    <name type="scientific">Cupriavidus metallidurans (strain ATCC 43123 / DSM 2839 / NBRC 102507 / CH34)</name>
    <name type="common">Ralstonia metallidurans</name>
    <dbReference type="NCBI Taxonomy" id="266264"/>
    <lineage>
        <taxon>Bacteria</taxon>
        <taxon>Pseudomonadati</taxon>
        <taxon>Pseudomonadota</taxon>
        <taxon>Betaproteobacteria</taxon>
        <taxon>Burkholderiales</taxon>
        <taxon>Burkholderiaceae</taxon>
        <taxon>Cupriavidus</taxon>
    </lineage>
</organism>
<proteinExistence type="inferred from homology"/>
<evidence type="ECO:0000255" key="1">
    <source>
        <dbReference type="HAMAP-Rule" id="MF_00502"/>
    </source>
</evidence>
<evidence type="ECO:0000305" key="2"/>
<comment type="subunit">
    <text evidence="1">Part of the 50S ribosomal subunit.</text>
</comment>
<comment type="similarity">
    <text evidence="1">Belongs to the bacterial ribosomal protein bL31 family. Type B subfamily.</text>
</comment>